<comment type="sequence caution" evidence="2">
    <conflict type="erroneous gene model prediction">
        <sequence resource="EMBL-CDS" id="AAD21734"/>
    </conflict>
</comment>
<dbReference type="EMBL" id="AC006931">
    <property type="protein sequence ID" value="AAD21734.1"/>
    <property type="status" value="ALT_SEQ"/>
    <property type="molecule type" value="Genomic_DNA"/>
</dbReference>
<dbReference type="EMBL" id="CP002685">
    <property type="protein sequence ID" value="AEC10161.2"/>
    <property type="molecule type" value="Genomic_DNA"/>
</dbReference>
<dbReference type="EMBL" id="AK228521">
    <property type="protein sequence ID" value="BAF00444.1"/>
    <property type="molecule type" value="mRNA"/>
</dbReference>
<dbReference type="PIR" id="E84857">
    <property type="entry name" value="E84857"/>
</dbReference>
<dbReference type="RefSeq" id="NP_001189735.1">
    <property type="nucleotide sequence ID" value="NM_001202806.2"/>
</dbReference>
<dbReference type="FunCoup" id="Q0WR05">
    <property type="interactions" value="161"/>
</dbReference>
<dbReference type="STRING" id="3702.Q0WR05"/>
<dbReference type="PaxDb" id="3702-AT2G42730.1"/>
<dbReference type="ProteomicsDB" id="230702"/>
<dbReference type="EnsemblPlants" id="AT2G42730.1">
    <property type="protein sequence ID" value="AT2G42730.1"/>
    <property type="gene ID" value="AT2G42730"/>
</dbReference>
<dbReference type="GeneID" id="818873"/>
<dbReference type="Gramene" id="AT2G42730.1">
    <property type="protein sequence ID" value="AT2G42730.1"/>
    <property type="gene ID" value="AT2G42730"/>
</dbReference>
<dbReference type="KEGG" id="ath:AT2G42730"/>
<dbReference type="Araport" id="AT2G42730"/>
<dbReference type="TAIR" id="AT2G42730"/>
<dbReference type="eggNOG" id="KOG1105">
    <property type="taxonomic scope" value="Eukaryota"/>
</dbReference>
<dbReference type="HOGENOM" id="CLU_010721_7_1_1"/>
<dbReference type="InParanoid" id="Q0WR05"/>
<dbReference type="OMA" id="MEMRNLM"/>
<dbReference type="OrthoDB" id="594804at2759"/>
<dbReference type="PhylomeDB" id="Q0WR05"/>
<dbReference type="PRO" id="PR:Q0WR05"/>
<dbReference type="Proteomes" id="UP000006548">
    <property type="component" value="Chromosome 2"/>
</dbReference>
<dbReference type="ExpressionAtlas" id="Q0WR05">
    <property type="expression patterns" value="baseline and differential"/>
</dbReference>
<dbReference type="CDD" id="cd22160">
    <property type="entry name" value="F-box_AtFBL13-like"/>
    <property type="match status" value="1"/>
</dbReference>
<dbReference type="Gene3D" id="1.20.1280.50">
    <property type="match status" value="1"/>
</dbReference>
<dbReference type="InterPro" id="IPR036047">
    <property type="entry name" value="F-box-like_dom_sf"/>
</dbReference>
<dbReference type="InterPro" id="IPR053781">
    <property type="entry name" value="F-box_AtFBL13-like"/>
</dbReference>
<dbReference type="InterPro" id="IPR001810">
    <property type="entry name" value="F-box_dom"/>
</dbReference>
<dbReference type="InterPro" id="IPR006566">
    <property type="entry name" value="FBD"/>
</dbReference>
<dbReference type="InterPro" id="IPR055294">
    <property type="entry name" value="FBL60-like"/>
</dbReference>
<dbReference type="InterPro" id="IPR055411">
    <property type="entry name" value="LRR_FXL15/At3g58940/PEG3-like"/>
</dbReference>
<dbReference type="PANTHER" id="PTHR31293">
    <property type="entry name" value="RNI-LIKE SUPERFAMILY PROTEIN"/>
    <property type="match status" value="1"/>
</dbReference>
<dbReference type="PANTHER" id="PTHR31293:SF12">
    <property type="entry name" value="RNI-LIKE SUPERFAMILY PROTEIN"/>
    <property type="match status" value="1"/>
</dbReference>
<dbReference type="Pfam" id="PF00646">
    <property type="entry name" value="F-box"/>
    <property type="match status" value="1"/>
</dbReference>
<dbReference type="Pfam" id="PF24758">
    <property type="entry name" value="LRR_At5g56370"/>
    <property type="match status" value="1"/>
</dbReference>
<dbReference type="SMART" id="SM00579">
    <property type="entry name" value="FBD"/>
    <property type="match status" value="1"/>
</dbReference>
<dbReference type="SUPFAM" id="SSF81383">
    <property type="entry name" value="F-box domain"/>
    <property type="match status" value="1"/>
</dbReference>
<dbReference type="SUPFAM" id="SSF52047">
    <property type="entry name" value="RNI-like"/>
    <property type="match status" value="1"/>
</dbReference>
<dbReference type="PROSITE" id="PS50181">
    <property type="entry name" value="FBOX"/>
    <property type="match status" value="1"/>
</dbReference>
<accession>Q0WR05</accession>
<accession>F4IP72</accession>
<accession>Q9SJI3</accession>
<evidence type="ECO:0000255" key="1">
    <source>
        <dbReference type="PROSITE-ProRule" id="PRU00080"/>
    </source>
</evidence>
<evidence type="ECO:0000305" key="2"/>
<sequence>MNAKDVISRLPDEVLGRILSLISTKEAVSTSVLSKRWKNMFVLVSNLDIDDRQSVPKTKQNRIEIHRNYMAFVDKLLDTQRGSSIKKLTLKSHVGVRGGTDSSRIQSWICNVLDHGVMDLDVFITLKGKSPPVPAMIFKSKTLVKLRVGRGFTIKLSQDVSLPLLRTLCLDSVNFVGGHNVVGTLISRCPVLEELVVEERRCVDWTCSVSSPSLKRLHIRFDRKFTSISLDAPNLIYYKHSGYVLGKYPNVKLDSLIEARLNLRMDETRMVGVRNGSLGSIPADMRNLINGIRNVRILHLSSHTLELLYFSCKEMPLFDSLVSLSIGNDKARGWQMLPLLIKNSPNLETLIFMGLDHYITNRCGDVCVCYDTDESITSCLSSSQVKVLEILSYQGTTRELNQMKHFLEKLPCLELVKICVVNNSNNLQTTMEMRNLMMLPRASSKCKIQVKVLTKNN</sequence>
<organism>
    <name type="scientific">Arabidopsis thaliana</name>
    <name type="common">Mouse-ear cress</name>
    <dbReference type="NCBI Taxonomy" id="3702"/>
    <lineage>
        <taxon>Eukaryota</taxon>
        <taxon>Viridiplantae</taxon>
        <taxon>Streptophyta</taxon>
        <taxon>Embryophyta</taxon>
        <taxon>Tracheophyta</taxon>
        <taxon>Spermatophyta</taxon>
        <taxon>Magnoliopsida</taxon>
        <taxon>eudicotyledons</taxon>
        <taxon>Gunneridae</taxon>
        <taxon>Pentapetalae</taxon>
        <taxon>rosids</taxon>
        <taxon>malvids</taxon>
        <taxon>Brassicales</taxon>
        <taxon>Brassicaceae</taxon>
        <taxon>Camelineae</taxon>
        <taxon>Arabidopsis</taxon>
    </lineage>
</organism>
<keyword id="KW-0433">Leucine-rich repeat</keyword>
<keyword id="KW-1185">Reference proteome</keyword>
<keyword id="KW-0677">Repeat</keyword>
<name>FBL39_ARATH</name>
<feature type="chain" id="PRO_0000281940" description="F-box/LRR-repeat protein At2g42730">
    <location>
        <begin position="1"/>
        <end position="457"/>
    </location>
</feature>
<feature type="domain" description="F-box" evidence="1">
    <location>
        <begin position="4"/>
        <end position="50"/>
    </location>
</feature>
<feature type="repeat" description="LRR 1">
    <location>
        <begin position="265"/>
        <end position="288"/>
    </location>
</feature>
<feature type="repeat" description="LRR 2">
    <location>
        <begin position="292"/>
        <end position="315"/>
    </location>
</feature>
<feature type="repeat" description="LRR 3">
    <location>
        <begin position="318"/>
        <end position="343"/>
    </location>
</feature>
<gene>
    <name type="ordered locus">At2g42730</name>
    <name type="ORF">F7D19.27</name>
</gene>
<protein>
    <recommendedName>
        <fullName>F-box/LRR-repeat protein At2g42730</fullName>
    </recommendedName>
</protein>
<reference key="1">
    <citation type="journal article" date="1999" name="Nature">
        <title>Sequence and analysis of chromosome 2 of the plant Arabidopsis thaliana.</title>
        <authorList>
            <person name="Lin X."/>
            <person name="Kaul S."/>
            <person name="Rounsley S.D."/>
            <person name="Shea T.P."/>
            <person name="Benito M.-I."/>
            <person name="Town C.D."/>
            <person name="Fujii C.Y."/>
            <person name="Mason T.M."/>
            <person name="Bowman C.L."/>
            <person name="Barnstead M.E."/>
            <person name="Feldblyum T.V."/>
            <person name="Buell C.R."/>
            <person name="Ketchum K.A."/>
            <person name="Lee J.J."/>
            <person name="Ronning C.M."/>
            <person name="Koo H.L."/>
            <person name="Moffat K.S."/>
            <person name="Cronin L.A."/>
            <person name="Shen M."/>
            <person name="Pai G."/>
            <person name="Van Aken S."/>
            <person name="Umayam L."/>
            <person name="Tallon L.J."/>
            <person name="Gill J.E."/>
            <person name="Adams M.D."/>
            <person name="Carrera A.J."/>
            <person name="Creasy T.H."/>
            <person name="Goodman H.M."/>
            <person name="Somerville C.R."/>
            <person name="Copenhaver G.P."/>
            <person name="Preuss D."/>
            <person name="Nierman W.C."/>
            <person name="White O."/>
            <person name="Eisen J.A."/>
            <person name="Salzberg S.L."/>
            <person name="Fraser C.M."/>
            <person name="Venter J.C."/>
        </authorList>
    </citation>
    <scope>NUCLEOTIDE SEQUENCE [LARGE SCALE GENOMIC DNA]</scope>
    <source>
        <strain>cv. Columbia</strain>
    </source>
</reference>
<reference key="2">
    <citation type="journal article" date="2017" name="Plant J.">
        <title>Araport11: a complete reannotation of the Arabidopsis thaliana reference genome.</title>
        <authorList>
            <person name="Cheng C.Y."/>
            <person name="Krishnakumar V."/>
            <person name="Chan A.P."/>
            <person name="Thibaud-Nissen F."/>
            <person name="Schobel S."/>
            <person name="Town C.D."/>
        </authorList>
    </citation>
    <scope>GENOME REANNOTATION</scope>
    <source>
        <strain>cv. Columbia</strain>
    </source>
</reference>
<reference key="3">
    <citation type="submission" date="2006-07" db="EMBL/GenBank/DDBJ databases">
        <title>Large-scale analysis of RIKEN Arabidopsis full-length (RAFL) cDNAs.</title>
        <authorList>
            <person name="Totoki Y."/>
            <person name="Seki M."/>
            <person name="Ishida J."/>
            <person name="Nakajima M."/>
            <person name="Enju A."/>
            <person name="Kamiya A."/>
            <person name="Narusaka M."/>
            <person name="Shin-i T."/>
            <person name="Nakagawa M."/>
            <person name="Sakamoto N."/>
            <person name="Oishi K."/>
            <person name="Kohara Y."/>
            <person name="Kobayashi M."/>
            <person name="Toyoda A."/>
            <person name="Sakaki Y."/>
            <person name="Sakurai T."/>
            <person name="Iida K."/>
            <person name="Akiyama K."/>
            <person name="Satou M."/>
            <person name="Toyoda T."/>
            <person name="Konagaya A."/>
            <person name="Carninci P."/>
            <person name="Kawai J."/>
            <person name="Hayashizaki Y."/>
            <person name="Shinozaki K."/>
        </authorList>
    </citation>
    <scope>NUCLEOTIDE SEQUENCE [LARGE SCALE MRNA]</scope>
    <source>
        <strain>cv. Columbia</strain>
    </source>
</reference>
<proteinExistence type="evidence at transcript level"/>